<sequence length="375" mass="42482">MRSHHRHFSSYVSFILFLFLFFISFSSSTSKLEPAKSEPKRKHSVSAILVFGDSTVDPGNNNYIDTVFKCNFPPYGLDFRNKTPTGRFCNGRLVTDFIASYIGVKENVPPYLDPNLGINELISGVSFASAGSGYDPLTPTITNVIDIPTQLEYFREYKRKLEGKMGKQEMEKHIEEAMFCVSAGTNDFVINYFTIPIRRKTFTIEAYQQFVISNLKQFIQGLWKEGARKITVAGLPPIGCLPIVITLFSGEALTNRRCIDRFSTVATNYNFLLQKQLALMQVGLAHLGSKIFYLDVYNPVYEVIRDPRKFGFEEVFSGCCGSGYLEASFLCNPKSYVCPNTSAYVFFDSIHPSEKTYFSLFRSLRPIYDSILGSF</sequence>
<name>GDL86_ARATH</name>
<evidence type="ECO:0000250" key="1"/>
<evidence type="ECO:0000255" key="2"/>
<evidence type="ECO:0000305" key="3"/>
<protein>
    <recommendedName>
        <fullName>GDSL esterase/lipase At5g45960</fullName>
        <ecNumber>3.1.1.-</ecNumber>
    </recommendedName>
    <alternativeName>
        <fullName>Extracellular lipase At5g45960</fullName>
    </alternativeName>
</protein>
<feature type="signal peptide" evidence="2">
    <location>
        <begin position="1"/>
        <end position="28"/>
    </location>
</feature>
<feature type="chain" id="PRO_0000367426" description="GDSL esterase/lipase At5g45960">
    <location>
        <begin position="29"/>
        <end position="375"/>
    </location>
</feature>
<feature type="active site" description="Nucleophile" evidence="1">
    <location>
        <position position="54"/>
    </location>
</feature>
<feature type="active site" evidence="1">
    <location>
        <position position="348"/>
    </location>
</feature>
<feature type="active site" evidence="1">
    <location>
        <position position="351"/>
    </location>
</feature>
<feature type="glycosylation site" description="N-linked (GlcNAc...) asparagine" evidence="2">
    <location>
        <position position="340"/>
    </location>
</feature>
<feature type="sequence conflict" description="In Ref. 3; AAM61295." evidence="3" ref="3">
    <original>F</original>
    <variation>S</variation>
    <location>
        <position position="8"/>
    </location>
</feature>
<feature type="sequence conflict" description="In Ref. 3; AAM61295." evidence="3" ref="3">
    <original>N</original>
    <variation>D</variation>
    <location>
        <position position="298"/>
    </location>
</feature>
<gene>
    <name type="ordered locus">At5g45960</name>
    <name type="ORF">K15I22.16</name>
</gene>
<keyword id="KW-0325">Glycoprotein</keyword>
<keyword id="KW-0378">Hydrolase</keyword>
<keyword id="KW-0442">Lipid degradation</keyword>
<keyword id="KW-0443">Lipid metabolism</keyword>
<keyword id="KW-1185">Reference proteome</keyword>
<keyword id="KW-0964">Secreted</keyword>
<keyword id="KW-0732">Signal</keyword>
<organism>
    <name type="scientific">Arabidopsis thaliana</name>
    <name type="common">Mouse-ear cress</name>
    <dbReference type="NCBI Taxonomy" id="3702"/>
    <lineage>
        <taxon>Eukaryota</taxon>
        <taxon>Viridiplantae</taxon>
        <taxon>Streptophyta</taxon>
        <taxon>Embryophyta</taxon>
        <taxon>Tracheophyta</taxon>
        <taxon>Spermatophyta</taxon>
        <taxon>Magnoliopsida</taxon>
        <taxon>eudicotyledons</taxon>
        <taxon>Gunneridae</taxon>
        <taxon>Pentapetalae</taxon>
        <taxon>rosids</taxon>
        <taxon>malvids</taxon>
        <taxon>Brassicales</taxon>
        <taxon>Brassicaceae</taxon>
        <taxon>Camelineae</taxon>
        <taxon>Arabidopsis</taxon>
    </lineage>
</organism>
<dbReference type="EC" id="3.1.1.-"/>
<dbReference type="EMBL" id="AB016870">
    <property type="protein sequence ID" value="BAB09324.1"/>
    <property type="molecule type" value="Genomic_DNA"/>
</dbReference>
<dbReference type="EMBL" id="CP002688">
    <property type="protein sequence ID" value="AED95320.1"/>
    <property type="molecule type" value="Genomic_DNA"/>
</dbReference>
<dbReference type="EMBL" id="AY084721">
    <property type="protein sequence ID" value="AAM61295.1"/>
    <property type="molecule type" value="mRNA"/>
</dbReference>
<dbReference type="RefSeq" id="NP_199408.1">
    <property type="nucleotide sequence ID" value="NM_123964.4"/>
</dbReference>
<dbReference type="SMR" id="Q9FJ40"/>
<dbReference type="FunCoup" id="Q9FJ40">
    <property type="interactions" value="101"/>
</dbReference>
<dbReference type="STRING" id="3702.Q9FJ40"/>
<dbReference type="GlyGen" id="Q9FJ40">
    <property type="glycosylation" value="1 site"/>
</dbReference>
<dbReference type="PaxDb" id="3702-AT5G45960.1"/>
<dbReference type="ProteomicsDB" id="221994"/>
<dbReference type="EnsemblPlants" id="AT5G45960.1">
    <property type="protein sequence ID" value="AT5G45960.1"/>
    <property type="gene ID" value="AT5G45960"/>
</dbReference>
<dbReference type="GeneID" id="834636"/>
<dbReference type="Gramene" id="AT5G45960.1">
    <property type="protein sequence ID" value="AT5G45960.1"/>
    <property type="gene ID" value="AT5G45960"/>
</dbReference>
<dbReference type="KEGG" id="ath:AT5G45960"/>
<dbReference type="Araport" id="AT5G45960"/>
<dbReference type="TAIR" id="AT5G45960"/>
<dbReference type="eggNOG" id="ENOG502QUD3">
    <property type="taxonomic scope" value="Eukaryota"/>
</dbReference>
<dbReference type="HOGENOM" id="CLU_015101_0_1_1"/>
<dbReference type="InParanoid" id="Q9FJ40"/>
<dbReference type="OMA" id="RIAYMDI"/>
<dbReference type="PhylomeDB" id="Q9FJ40"/>
<dbReference type="BioCyc" id="ARA:AT5G45960-MONOMER"/>
<dbReference type="PRO" id="PR:Q9FJ40"/>
<dbReference type="Proteomes" id="UP000006548">
    <property type="component" value="Chromosome 5"/>
</dbReference>
<dbReference type="ExpressionAtlas" id="Q9FJ40">
    <property type="expression patterns" value="baseline and differential"/>
</dbReference>
<dbReference type="GO" id="GO:0005576">
    <property type="term" value="C:extracellular region"/>
    <property type="evidence" value="ECO:0007669"/>
    <property type="project" value="UniProtKB-SubCell"/>
</dbReference>
<dbReference type="GO" id="GO:0016788">
    <property type="term" value="F:hydrolase activity, acting on ester bonds"/>
    <property type="evidence" value="ECO:0007669"/>
    <property type="project" value="InterPro"/>
</dbReference>
<dbReference type="GO" id="GO:0016042">
    <property type="term" value="P:lipid catabolic process"/>
    <property type="evidence" value="ECO:0007669"/>
    <property type="project" value="UniProtKB-KW"/>
</dbReference>
<dbReference type="CDD" id="cd01837">
    <property type="entry name" value="SGNH_plant_lipase_like"/>
    <property type="match status" value="1"/>
</dbReference>
<dbReference type="FunFam" id="3.40.50.1110:FF:000003">
    <property type="entry name" value="GDSL esterase/lipase APG"/>
    <property type="match status" value="1"/>
</dbReference>
<dbReference type="Gene3D" id="3.40.50.1110">
    <property type="entry name" value="SGNH hydrolase"/>
    <property type="match status" value="1"/>
</dbReference>
<dbReference type="InterPro" id="IPR001087">
    <property type="entry name" value="GDSL"/>
</dbReference>
<dbReference type="InterPro" id="IPR050592">
    <property type="entry name" value="GDSL_lipolytic_enzyme"/>
</dbReference>
<dbReference type="InterPro" id="IPR036514">
    <property type="entry name" value="SGNH_hydro_sf"/>
</dbReference>
<dbReference type="InterPro" id="IPR035669">
    <property type="entry name" value="SGNH_plant_lipase-like"/>
</dbReference>
<dbReference type="PANTHER" id="PTHR45642">
    <property type="entry name" value="GDSL ESTERASE/LIPASE EXL3"/>
    <property type="match status" value="1"/>
</dbReference>
<dbReference type="PANTHER" id="PTHR45642:SF3">
    <property type="entry name" value="OS09G0540400 PROTEIN"/>
    <property type="match status" value="1"/>
</dbReference>
<dbReference type="Pfam" id="PF00657">
    <property type="entry name" value="Lipase_GDSL"/>
    <property type="match status" value="1"/>
</dbReference>
<dbReference type="SUPFAM" id="SSF52266">
    <property type="entry name" value="SGNH hydrolase"/>
    <property type="match status" value="1"/>
</dbReference>
<proteinExistence type="evidence at transcript level"/>
<reference key="1">
    <citation type="journal article" date="1998" name="DNA Res.">
        <title>Structural analysis of Arabidopsis thaliana chromosome 5. VIII. Sequence features of the regions of 1,081,958 bp covered by seventeen physically assigned P1 and TAC clones.</title>
        <authorList>
            <person name="Asamizu E."/>
            <person name="Sato S."/>
            <person name="Kaneko T."/>
            <person name="Nakamura Y."/>
            <person name="Kotani H."/>
            <person name="Miyajima N."/>
            <person name="Tabata S."/>
        </authorList>
    </citation>
    <scope>NUCLEOTIDE SEQUENCE [LARGE SCALE GENOMIC DNA]</scope>
    <source>
        <strain>cv. Columbia</strain>
    </source>
</reference>
<reference key="2">
    <citation type="journal article" date="2017" name="Plant J.">
        <title>Araport11: a complete reannotation of the Arabidopsis thaliana reference genome.</title>
        <authorList>
            <person name="Cheng C.Y."/>
            <person name="Krishnakumar V."/>
            <person name="Chan A.P."/>
            <person name="Thibaud-Nissen F."/>
            <person name="Schobel S."/>
            <person name="Town C.D."/>
        </authorList>
    </citation>
    <scope>GENOME REANNOTATION</scope>
    <source>
        <strain>cv. Columbia</strain>
    </source>
</reference>
<reference key="3">
    <citation type="submission" date="2002-03" db="EMBL/GenBank/DDBJ databases">
        <title>Full-length cDNA from Arabidopsis thaliana.</title>
        <authorList>
            <person name="Brover V.V."/>
            <person name="Troukhan M.E."/>
            <person name="Alexandrov N.A."/>
            <person name="Lu Y.-P."/>
            <person name="Flavell R.B."/>
            <person name="Feldmann K.A."/>
        </authorList>
    </citation>
    <scope>NUCLEOTIDE SEQUENCE [LARGE SCALE MRNA]</scope>
</reference>
<reference key="4">
    <citation type="journal article" date="2004" name="Prog. Lipid Res.">
        <title>GDSL family of serine esterases/lipases.</title>
        <authorList>
            <person name="Akoh C.C."/>
            <person name="Lee G.-C."/>
            <person name="Liaw Y.-C."/>
            <person name="Huang T.-H."/>
            <person name="Shaw J.-F."/>
        </authorList>
    </citation>
    <scope>REVIEW</scope>
</reference>
<reference key="5">
    <citation type="journal article" date="2008" name="Pak. J. Biol. Sci.">
        <title>Sequence analysis of GDSL lipase gene family in Arabidopsis thaliana.</title>
        <authorList>
            <person name="Ling H."/>
        </authorList>
    </citation>
    <scope>GENE FAMILY</scope>
</reference>
<comment type="subcellular location">
    <subcellularLocation>
        <location evidence="3">Secreted</location>
    </subcellularLocation>
</comment>
<comment type="similarity">
    <text evidence="3">Belongs to the 'GDSL' lipolytic enzyme family.</text>
</comment>
<accession>Q9FJ40</accession>
<accession>Q8LFP6</accession>